<proteinExistence type="evidence at transcript level"/>
<sequence>MSEKPKVYQGVRVKMTVKELLQQRRAHQATSGANLSGSSGLHLPDTTMPSSAGLYFEPEPTSSTPSYFQTREFSTCVSCEEIPSCLDQIFESYLQTDTLPEPLLNSAQIAPHYFPESCQVAPFCHNQSLIPGSPSDSSSLSGSFDCSYSPTQLPSYTPENYSSPPSLDSLHSSLPEEGYFCQHWPSHPQYNHSSPATPSSVCYYASCEAEHLDALRTTEFFSYSGMDCADFAPPVATTGDFYKRETSCDACYS</sequence>
<feature type="chain" id="PRO_0000456713" description="POU Class 2 homeobox-associating factor 3">
    <location>
        <begin position="1"/>
        <end position="253"/>
    </location>
</feature>
<feature type="domain" description="OCA" evidence="2">
    <location>
        <begin position="5"/>
        <end position="27"/>
    </location>
</feature>
<feature type="splice variant" id="VSP_061668" description="In isoform 2.">
    <location>
        <begin position="1"/>
        <end position="14"/>
    </location>
</feature>
<gene>
    <name evidence="6" type="primary">Pou2af3</name>
    <name type="synonym">Colca2</name>
    <name evidence="6" type="synonym">Gm684</name>
</gene>
<protein>
    <recommendedName>
        <fullName evidence="6">POU Class 2 homeobox-associating factor 3</fullName>
    </recommendedName>
    <alternativeName>
        <fullName evidence="4">Protein OCA-T2</fullName>
    </alternativeName>
</protein>
<dbReference type="EMBL" id="AC160052">
    <property type="status" value="NOT_ANNOTATED_CDS"/>
    <property type="molecule type" value="Genomic_DNA"/>
</dbReference>
<dbReference type="CCDS" id="CCDS57676.1">
    <molecule id="F8VPY8-2"/>
</dbReference>
<dbReference type="RefSeq" id="NP_001182610.1">
    <molecule id="F8VPY8-2"/>
    <property type="nucleotide sequence ID" value="NM_001195681.2"/>
</dbReference>
<dbReference type="RefSeq" id="NP_001396886.1">
    <molecule id="F8VPY8-2"/>
    <property type="nucleotide sequence ID" value="NM_001409957.1"/>
</dbReference>
<dbReference type="RefSeq" id="XP_006509958.1">
    <property type="nucleotide sequence ID" value="XM_006509895.3"/>
</dbReference>
<dbReference type="RefSeq" id="XP_006509959.1">
    <molecule id="F8VPY8-2"/>
    <property type="nucleotide sequence ID" value="XM_006509896.5"/>
</dbReference>
<dbReference type="SMR" id="F8VPY8"/>
<dbReference type="FunCoup" id="F8VPY8">
    <property type="interactions" value="706"/>
</dbReference>
<dbReference type="STRING" id="10090.ENSMUSP00000150539"/>
<dbReference type="GlyGen" id="F8VPY8">
    <property type="glycosylation" value="2 sites"/>
</dbReference>
<dbReference type="PaxDb" id="10090-ENSMUSP00000110070"/>
<dbReference type="Ensembl" id="ENSMUST00000114427.4">
    <molecule id="F8VPY8-2"/>
    <property type="protein sequence ID" value="ENSMUSP00000110070.4"/>
    <property type="gene ID" value="ENSMUSG00000079559.6"/>
</dbReference>
<dbReference type="Ensembl" id="ENSMUST00000215038.3">
    <molecule id="F8VPY8-2"/>
    <property type="protein sequence ID" value="ENSMUSP00000150539.2"/>
    <property type="gene ID" value="ENSMUSG00000079559.6"/>
</dbReference>
<dbReference type="Ensembl" id="ENSMUST00000239415.2">
    <molecule id="F8VPY8-1"/>
    <property type="protein sequence ID" value="ENSMUSP00000159303.2"/>
    <property type="gene ID" value="ENSMUSG00000079559.6"/>
</dbReference>
<dbReference type="GeneID" id="100502940"/>
<dbReference type="KEGG" id="mmu:100502940"/>
<dbReference type="UCSC" id="uc012gtf.1">
    <molecule id="F8VPY8-1"/>
    <property type="organism name" value="mouse"/>
</dbReference>
<dbReference type="AGR" id="MGI:2685530"/>
<dbReference type="CTD" id="120376"/>
<dbReference type="MGI" id="MGI:2685530">
    <property type="gene designation" value="Pou2af3"/>
</dbReference>
<dbReference type="VEuPathDB" id="HostDB:ENSMUSG00000079559"/>
<dbReference type="eggNOG" id="ENOG502S1YS">
    <property type="taxonomic scope" value="Eukaryota"/>
</dbReference>
<dbReference type="GeneTree" id="ENSGT00420000030454"/>
<dbReference type="HOGENOM" id="CLU_102979_0_0_1"/>
<dbReference type="OMA" id="HGYPQED"/>
<dbReference type="OrthoDB" id="9942157at2759"/>
<dbReference type="BioGRID-ORCS" id="100502940">
    <property type="hits" value="2 hits in 70 CRISPR screens"/>
</dbReference>
<dbReference type="PRO" id="PR:F8VPY8"/>
<dbReference type="Proteomes" id="UP000000589">
    <property type="component" value="Chromosome 9"/>
</dbReference>
<dbReference type="RNAct" id="F8VPY8">
    <property type="molecule type" value="protein"/>
</dbReference>
<dbReference type="Bgee" id="ENSMUSG00000079559">
    <property type="expression patterns" value="Expressed in white adipose tissue and 57 other cell types or tissues"/>
</dbReference>
<dbReference type="ExpressionAtlas" id="F8VPY8">
    <property type="expression patterns" value="baseline and differential"/>
</dbReference>
<dbReference type="GO" id="GO:0005829">
    <property type="term" value="C:cytosol"/>
    <property type="evidence" value="ECO:0007669"/>
    <property type="project" value="Ensembl"/>
</dbReference>
<dbReference type="GO" id="GO:0005654">
    <property type="term" value="C:nucleoplasm"/>
    <property type="evidence" value="ECO:0007669"/>
    <property type="project" value="Ensembl"/>
</dbReference>
<dbReference type="GO" id="GO:0005634">
    <property type="term" value="C:nucleus"/>
    <property type="evidence" value="ECO:0000250"/>
    <property type="project" value="UniProtKB"/>
</dbReference>
<dbReference type="GO" id="GO:0003677">
    <property type="term" value="F:DNA binding"/>
    <property type="evidence" value="ECO:0000250"/>
    <property type="project" value="UniProtKB"/>
</dbReference>
<dbReference type="GO" id="GO:0070974">
    <property type="term" value="F:POU domain binding"/>
    <property type="evidence" value="ECO:0007669"/>
    <property type="project" value="InterPro"/>
</dbReference>
<dbReference type="GO" id="GO:0003713">
    <property type="term" value="F:transcription coactivator activity"/>
    <property type="evidence" value="ECO:0000250"/>
    <property type="project" value="UniProtKB"/>
</dbReference>
<dbReference type="InterPro" id="IPR047571">
    <property type="entry name" value="OCA"/>
</dbReference>
<dbReference type="InterPro" id="IPR043265">
    <property type="entry name" value="OCAT2"/>
</dbReference>
<dbReference type="PANTHER" id="PTHR36689">
    <property type="entry name" value="COLORECTAL CANCER-ASSOCIATED PROTEIN 2"/>
    <property type="match status" value="1"/>
</dbReference>
<dbReference type="PANTHER" id="PTHR36689:SF1">
    <property type="entry name" value="POU CLASS 2 HOMEOBOX ASSOCIATING FACTOR 3"/>
    <property type="match status" value="1"/>
</dbReference>
<dbReference type="PROSITE" id="PS52003">
    <property type="entry name" value="OCA"/>
    <property type="match status" value="1"/>
</dbReference>
<comment type="function">
    <text evidence="1">Transcriptional coactivator that specifically associates with POU2F3. This complex drives the development of tuft cells, a rare a rare chemosensory cells that coordinate immune and neural functions within mucosal epithelial tissues.</text>
</comment>
<comment type="subunit">
    <text evidence="1">Interacts with POU2F3 in a DNA-dependent manner; this interaction increases POU2F3 transactivation activity.</text>
</comment>
<comment type="subcellular location">
    <subcellularLocation>
        <location evidence="1">Cytoplasm</location>
    </subcellularLocation>
    <subcellularLocation>
        <location evidence="1">Nucleus</location>
    </subcellularLocation>
</comment>
<comment type="alternative products">
    <event type="alternative splicing"/>
    <isoform>
        <id>F8VPY8-1</id>
        <name>1</name>
        <sequence type="displayed"/>
    </isoform>
    <isoform>
        <id>F8VPY8-2</id>
        <name>2</name>
        <sequence type="described" ref="VSP_061668"/>
    </isoform>
</comment>
<comment type="tissue specificity">
    <text evidence="3">Expressed in tuft cells.</text>
</comment>
<comment type="domain">
    <text evidence="1">In the N-terminus possesses a conserved OCA domain for bivalent binding to class II POU domain-containing transcription factors and to an octamer DNA motif (5'-ATGAAAT-3').</text>
</comment>
<comment type="similarity">
    <text evidence="5">Belongs to the POU2AF family.</text>
</comment>
<name>OCAT2_MOUSE</name>
<evidence type="ECO:0000250" key="1">
    <source>
        <dbReference type="UniProtKB" id="A8K830"/>
    </source>
</evidence>
<evidence type="ECO:0000255" key="2">
    <source>
        <dbReference type="PROSITE-ProRule" id="PRU01347"/>
    </source>
</evidence>
<evidence type="ECO:0000269" key="3">
    <source>
    </source>
</evidence>
<evidence type="ECO:0000303" key="4">
    <source>
    </source>
</evidence>
<evidence type="ECO:0000305" key="5"/>
<evidence type="ECO:0000312" key="6">
    <source>
        <dbReference type="MGI" id="MGI:2685530"/>
    </source>
</evidence>
<accession>F8VPY8</accession>
<accession>A0A6I8MWX2</accession>
<keyword id="KW-0010">Activator</keyword>
<keyword id="KW-0025">Alternative splicing</keyword>
<keyword id="KW-0963">Cytoplasm</keyword>
<keyword id="KW-0539">Nucleus</keyword>
<keyword id="KW-1185">Reference proteome</keyword>
<keyword id="KW-0804">Transcription</keyword>
<keyword id="KW-0805">Transcription regulation</keyword>
<organism>
    <name type="scientific">Mus musculus</name>
    <name type="common">Mouse</name>
    <dbReference type="NCBI Taxonomy" id="10090"/>
    <lineage>
        <taxon>Eukaryota</taxon>
        <taxon>Metazoa</taxon>
        <taxon>Chordata</taxon>
        <taxon>Craniata</taxon>
        <taxon>Vertebrata</taxon>
        <taxon>Euteleostomi</taxon>
        <taxon>Mammalia</taxon>
        <taxon>Eutheria</taxon>
        <taxon>Euarchontoglires</taxon>
        <taxon>Glires</taxon>
        <taxon>Rodentia</taxon>
        <taxon>Myomorpha</taxon>
        <taxon>Muroidea</taxon>
        <taxon>Muridae</taxon>
        <taxon>Murinae</taxon>
        <taxon>Mus</taxon>
        <taxon>Mus</taxon>
    </lineage>
</organism>
<reference key="1">
    <citation type="journal article" date="2009" name="PLoS Biol.">
        <title>Lineage-specific biology revealed by a finished genome assembly of the mouse.</title>
        <authorList>
            <person name="Church D.M."/>
            <person name="Goodstadt L."/>
            <person name="Hillier L.W."/>
            <person name="Zody M.C."/>
            <person name="Goldstein S."/>
            <person name="She X."/>
            <person name="Bult C.J."/>
            <person name="Agarwala R."/>
            <person name="Cherry J.L."/>
            <person name="DiCuccio M."/>
            <person name="Hlavina W."/>
            <person name="Kapustin Y."/>
            <person name="Meric P."/>
            <person name="Maglott D."/>
            <person name="Birtle Z."/>
            <person name="Marques A.C."/>
            <person name="Graves T."/>
            <person name="Zhou S."/>
            <person name="Teague B."/>
            <person name="Potamousis K."/>
            <person name="Churas C."/>
            <person name="Place M."/>
            <person name="Herschleb J."/>
            <person name="Runnheim R."/>
            <person name="Forrest D."/>
            <person name="Amos-Landgraf J."/>
            <person name="Schwartz D.C."/>
            <person name="Cheng Z."/>
            <person name="Lindblad-Toh K."/>
            <person name="Eichler E.E."/>
            <person name="Ponting C.P."/>
        </authorList>
    </citation>
    <scope>NUCLEOTIDE SEQUENCE [LARGE SCALE GENOMIC DNA]</scope>
    <source>
        <strain>C57BL/6J</strain>
    </source>
</reference>
<reference key="2">
    <citation type="journal article" date="2022" name="Nature">
        <title>OCA-T1 and OCA-T2 are coactivators of POU2F3 in the tuft cell lineage.</title>
        <authorList>
            <person name="Wu X.S."/>
            <person name="He X.Y."/>
            <person name="Ipsaro J.J."/>
            <person name="Huang Y.H."/>
            <person name="Preall J.B."/>
            <person name="Ng D."/>
            <person name="Shue Y.T."/>
            <person name="Sage J."/>
            <person name="Egeblad M."/>
            <person name="Joshua-Tor L."/>
            <person name="Vakoc C.R."/>
        </authorList>
    </citation>
    <scope>TISSUE SPECIFICITY</scope>
    <scope>OCA DOMAIN</scope>
</reference>